<reference key="1">
    <citation type="journal article" date="2011" name="Appl. Environ. Microbiol.">
        <title>Genomic potential of Marinobacter aquaeolei, a biogeochemical 'opportunitroph'.</title>
        <authorList>
            <person name="Singer E."/>
            <person name="Webb E.A."/>
            <person name="Nelson W.C."/>
            <person name="Heidelberg J.F."/>
            <person name="Ivanova N."/>
            <person name="Pati A."/>
            <person name="Edwards K.J."/>
        </authorList>
    </citation>
    <scope>NUCLEOTIDE SEQUENCE [LARGE SCALE GENOMIC DNA]</scope>
    <source>
        <strain>ATCC 700491 / DSM 11845 / VT8</strain>
    </source>
</reference>
<evidence type="ECO:0000255" key="1">
    <source>
        <dbReference type="HAMAP-Rule" id="MF_01152"/>
    </source>
</evidence>
<evidence type="ECO:0000256" key="2">
    <source>
        <dbReference type="SAM" id="MobiDB-lite"/>
    </source>
</evidence>
<gene>
    <name evidence="1" type="primary">dnaJ</name>
    <name type="ordered locus">Maqu_3361</name>
</gene>
<sequence length="374" mass="40714">MAKRDYYEVLGISRDADEKEIKRAYRKLAMKYHPDRNPDDKDAETKFKEASEAYEILADSSKRAAYDQFGHAGVDGQAGGGFGGGGASFSDIFGDVFGDIFGGGGRGRTTRGADLRYTLELDLEEAVKGKTVKINIPGHKECEACDGSGAEKGSRPETCGTCQGMGQVRMQQGFFTVQQACPTCRGSGQIIKNPCKSCHGQGRVRQEKTLSVKVPPGVDTGDRIRLSGEGEMGVDGGPPGDLYVQVAVREHSIFTRDGRNLYCEVPISIVDATLGGELEVPTLDGRVKLKIPPETQTGKLFRLRNKGVSPVRGGPAGDLLCRVIVETPVNLTKRQKELLEEFQQTLDGNNGTHHAPKKTSWFEGVKNFFDEMKF</sequence>
<name>DNAJ_MARN8</name>
<dbReference type="EMBL" id="CP000514">
    <property type="protein sequence ID" value="ABM20432.1"/>
    <property type="molecule type" value="Genomic_DNA"/>
</dbReference>
<dbReference type="RefSeq" id="WP_011786773.1">
    <property type="nucleotide sequence ID" value="NC_008740.1"/>
</dbReference>
<dbReference type="SMR" id="A1U613"/>
<dbReference type="STRING" id="351348.Maqu_3361"/>
<dbReference type="KEGG" id="maq:Maqu_3361"/>
<dbReference type="eggNOG" id="COG0484">
    <property type="taxonomic scope" value="Bacteria"/>
</dbReference>
<dbReference type="HOGENOM" id="CLU_017633_0_7_6"/>
<dbReference type="OrthoDB" id="9779889at2"/>
<dbReference type="Proteomes" id="UP000000998">
    <property type="component" value="Chromosome"/>
</dbReference>
<dbReference type="GO" id="GO:0005737">
    <property type="term" value="C:cytoplasm"/>
    <property type="evidence" value="ECO:0007669"/>
    <property type="project" value="UniProtKB-SubCell"/>
</dbReference>
<dbReference type="GO" id="GO:0005524">
    <property type="term" value="F:ATP binding"/>
    <property type="evidence" value="ECO:0007669"/>
    <property type="project" value="InterPro"/>
</dbReference>
<dbReference type="GO" id="GO:0031072">
    <property type="term" value="F:heat shock protein binding"/>
    <property type="evidence" value="ECO:0007669"/>
    <property type="project" value="InterPro"/>
</dbReference>
<dbReference type="GO" id="GO:0051082">
    <property type="term" value="F:unfolded protein binding"/>
    <property type="evidence" value="ECO:0007669"/>
    <property type="project" value="UniProtKB-UniRule"/>
</dbReference>
<dbReference type="GO" id="GO:0008270">
    <property type="term" value="F:zinc ion binding"/>
    <property type="evidence" value="ECO:0007669"/>
    <property type="project" value="UniProtKB-UniRule"/>
</dbReference>
<dbReference type="GO" id="GO:0051085">
    <property type="term" value="P:chaperone cofactor-dependent protein refolding"/>
    <property type="evidence" value="ECO:0007669"/>
    <property type="project" value="TreeGrafter"/>
</dbReference>
<dbReference type="GO" id="GO:0006260">
    <property type="term" value="P:DNA replication"/>
    <property type="evidence" value="ECO:0007669"/>
    <property type="project" value="UniProtKB-KW"/>
</dbReference>
<dbReference type="GO" id="GO:0042026">
    <property type="term" value="P:protein refolding"/>
    <property type="evidence" value="ECO:0007669"/>
    <property type="project" value="TreeGrafter"/>
</dbReference>
<dbReference type="GO" id="GO:0009408">
    <property type="term" value="P:response to heat"/>
    <property type="evidence" value="ECO:0007669"/>
    <property type="project" value="InterPro"/>
</dbReference>
<dbReference type="CDD" id="cd06257">
    <property type="entry name" value="DnaJ"/>
    <property type="match status" value="1"/>
</dbReference>
<dbReference type="CDD" id="cd10747">
    <property type="entry name" value="DnaJ_C"/>
    <property type="match status" value="1"/>
</dbReference>
<dbReference type="CDD" id="cd10719">
    <property type="entry name" value="DnaJ_zf"/>
    <property type="match status" value="1"/>
</dbReference>
<dbReference type="FunFam" id="1.10.287.110:FF:000034">
    <property type="entry name" value="Chaperone protein DnaJ"/>
    <property type="match status" value="1"/>
</dbReference>
<dbReference type="FunFam" id="2.10.230.10:FF:000002">
    <property type="entry name" value="Molecular chaperone DnaJ"/>
    <property type="match status" value="1"/>
</dbReference>
<dbReference type="FunFam" id="2.60.260.20:FF:000004">
    <property type="entry name" value="Molecular chaperone DnaJ"/>
    <property type="match status" value="1"/>
</dbReference>
<dbReference type="Gene3D" id="1.10.287.110">
    <property type="entry name" value="DnaJ domain"/>
    <property type="match status" value="1"/>
</dbReference>
<dbReference type="Gene3D" id="2.10.230.10">
    <property type="entry name" value="Heat shock protein DnaJ, cysteine-rich domain"/>
    <property type="match status" value="1"/>
</dbReference>
<dbReference type="Gene3D" id="2.60.260.20">
    <property type="entry name" value="Urease metallochaperone UreE, N-terminal domain"/>
    <property type="match status" value="2"/>
</dbReference>
<dbReference type="HAMAP" id="MF_01152">
    <property type="entry name" value="DnaJ"/>
    <property type="match status" value="1"/>
</dbReference>
<dbReference type="InterPro" id="IPR012724">
    <property type="entry name" value="DnaJ"/>
</dbReference>
<dbReference type="InterPro" id="IPR002939">
    <property type="entry name" value="DnaJ_C"/>
</dbReference>
<dbReference type="InterPro" id="IPR001623">
    <property type="entry name" value="DnaJ_domain"/>
</dbReference>
<dbReference type="InterPro" id="IPR018253">
    <property type="entry name" value="DnaJ_domain_CS"/>
</dbReference>
<dbReference type="InterPro" id="IPR008971">
    <property type="entry name" value="HSP40/DnaJ_pept-bd"/>
</dbReference>
<dbReference type="InterPro" id="IPR001305">
    <property type="entry name" value="HSP_DnaJ_Cys-rich_dom"/>
</dbReference>
<dbReference type="InterPro" id="IPR036410">
    <property type="entry name" value="HSP_DnaJ_Cys-rich_dom_sf"/>
</dbReference>
<dbReference type="InterPro" id="IPR036869">
    <property type="entry name" value="J_dom_sf"/>
</dbReference>
<dbReference type="NCBIfam" id="TIGR02349">
    <property type="entry name" value="DnaJ_bact"/>
    <property type="match status" value="1"/>
</dbReference>
<dbReference type="NCBIfam" id="NF008035">
    <property type="entry name" value="PRK10767.1"/>
    <property type="match status" value="1"/>
</dbReference>
<dbReference type="PANTHER" id="PTHR43096:SF48">
    <property type="entry name" value="CHAPERONE PROTEIN DNAJ"/>
    <property type="match status" value="1"/>
</dbReference>
<dbReference type="PANTHER" id="PTHR43096">
    <property type="entry name" value="DNAJ HOMOLOG 1, MITOCHONDRIAL-RELATED"/>
    <property type="match status" value="1"/>
</dbReference>
<dbReference type="Pfam" id="PF00226">
    <property type="entry name" value="DnaJ"/>
    <property type="match status" value="1"/>
</dbReference>
<dbReference type="Pfam" id="PF01556">
    <property type="entry name" value="DnaJ_C"/>
    <property type="match status" value="1"/>
</dbReference>
<dbReference type="Pfam" id="PF00684">
    <property type="entry name" value="DnaJ_CXXCXGXG"/>
    <property type="match status" value="1"/>
</dbReference>
<dbReference type="PRINTS" id="PR00625">
    <property type="entry name" value="JDOMAIN"/>
</dbReference>
<dbReference type="SMART" id="SM00271">
    <property type="entry name" value="DnaJ"/>
    <property type="match status" value="1"/>
</dbReference>
<dbReference type="SUPFAM" id="SSF46565">
    <property type="entry name" value="Chaperone J-domain"/>
    <property type="match status" value="1"/>
</dbReference>
<dbReference type="SUPFAM" id="SSF57938">
    <property type="entry name" value="DnaJ/Hsp40 cysteine-rich domain"/>
    <property type="match status" value="1"/>
</dbReference>
<dbReference type="SUPFAM" id="SSF49493">
    <property type="entry name" value="HSP40/DnaJ peptide-binding domain"/>
    <property type="match status" value="2"/>
</dbReference>
<dbReference type="PROSITE" id="PS00636">
    <property type="entry name" value="DNAJ_1"/>
    <property type="match status" value="1"/>
</dbReference>
<dbReference type="PROSITE" id="PS50076">
    <property type="entry name" value="DNAJ_2"/>
    <property type="match status" value="1"/>
</dbReference>
<dbReference type="PROSITE" id="PS51188">
    <property type="entry name" value="ZF_CR"/>
    <property type="match status" value="1"/>
</dbReference>
<keyword id="KW-0143">Chaperone</keyword>
<keyword id="KW-0963">Cytoplasm</keyword>
<keyword id="KW-0235">DNA replication</keyword>
<keyword id="KW-0479">Metal-binding</keyword>
<keyword id="KW-0677">Repeat</keyword>
<keyword id="KW-0346">Stress response</keyword>
<keyword id="KW-0862">Zinc</keyword>
<keyword id="KW-0863">Zinc-finger</keyword>
<proteinExistence type="inferred from homology"/>
<comment type="function">
    <text evidence="1">Participates actively in the response to hyperosmotic and heat shock by preventing the aggregation of stress-denatured proteins and by disaggregating proteins, also in an autonomous, DnaK-independent fashion. Unfolded proteins bind initially to DnaJ; upon interaction with the DnaJ-bound protein, DnaK hydrolyzes its bound ATP, resulting in the formation of a stable complex. GrpE releases ADP from DnaK; ATP binding to DnaK triggers the release of the substrate protein, thus completing the reaction cycle. Several rounds of ATP-dependent interactions between DnaJ, DnaK and GrpE are required for fully efficient folding. Also involved, together with DnaK and GrpE, in the DNA replication of plasmids through activation of initiation proteins.</text>
</comment>
<comment type="cofactor">
    <cofactor evidence="1">
        <name>Zn(2+)</name>
        <dbReference type="ChEBI" id="CHEBI:29105"/>
    </cofactor>
    <text evidence="1">Binds 2 Zn(2+) ions per monomer.</text>
</comment>
<comment type="subunit">
    <text evidence="1">Homodimer.</text>
</comment>
<comment type="subcellular location">
    <subcellularLocation>
        <location evidence="1">Cytoplasm</location>
    </subcellularLocation>
</comment>
<comment type="domain">
    <text evidence="1">The J domain is necessary and sufficient to stimulate DnaK ATPase activity. Zinc center 1 plays an important role in the autonomous, DnaK-independent chaperone activity of DnaJ. Zinc center 2 is essential for interaction with DnaK and for DnaJ activity.</text>
</comment>
<comment type="similarity">
    <text evidence="1">Belongs to the DnaJ family.</text>
</comment>
<organism>
    <name type="scientific">Marinobacter nauticus (strain ATCC 700491 / DSM 11845 / VT8)</name>
    <name type="common">Marinobacter aquaeolei</name>
    <dbReference type="NCBI Taxonomy" id="351348"/>
    <lineage>
        <taxon>Bacteria</taxon>
        <taxon>Pseudomonadati</taxon>
        <taxon>Pseudomonadota</taxon>
        <taxon>Gammaproteobacteria</taxon>
        <taxon>Pseudomonadales</taxon>
        <taxon>Marinobacteraceae</taxon>
        <taxon>Marinobacter</taxon>
    </lineage>
</organism>
<accession>A1U613</accession>
<protein>
    <recommendedName>
        <fullName evidence="1">Chaperone protein DnaJ</fullName>
    </recommendedName>
</protein>
<feature type="chain" id="PRO_1000085223" description="Chaperone protein DnaJ">
    <location>
        <begin position="1"/>
        <end position="374"/>
    </location>
</feature>
<feature type="domain" description="J" evidence="1">
    <location>
        <begin position="5"/>
        <end position="70"/>
    </location>
</feature>
<feature type="repeat" description="CXXCXGXG motif">
    <location>
        <begin position="142"/>
        <end position="149"/>
    </location>
</feature>
<feature type="repeat" description="CXXCXGXG motif">
    <location>
        <begin position="159"/>
        <end position="166"/>
    </location>
</feature>
<feature type="repeat" description="CXXCXGXG motif">
    <location>
        <begin position="181"/>
        <end position="188"/>
    </location>
</feature>
<feature type="repeat" description="CXXCXGXG motif">
    <location>
        <begin position="195"/>
        <end position="202"/>
    </location>
</feature>
<feature type="zinc finger region" description="CR-type" evidence="1">
    <location>
        <begin position="129"/>
        <end position="207"/>
    </location>
</feature>
<feature type="region of interest" description="Disordered" evidence="2">
    <location>
        <begin position="216"/>
        <end position="238"/>
    </location>
</feature>
<feature type="binding site" evidence="1">
    <location>
        <position position="142"/>
    </location>
    <ligand>
        <name>Zn(2+)</name>
        <dbReference type="ChEBI" id="CHEBI:29105"/>
        <label>1</label>
    </ligand>
</feature>
<feature type="binding site" evidence="1">
    <location>
        <position position="145"/>
    </location>
    <ligand>
        <name>Zn(2+)</name>
        <dbReference type="ChEBI" id="CHEBI:29105"/>
        <label>1</label>
    </ligand>
</feature>
<feature type="binding site" evidence="1">
    <location>
        <position position="159"/>
    </location>
    <ligand>
        <name>Zn(2+)</name>
        <dbReference type="ChEBI" id="CHEBI:29105"/>
        <label>2</label>
    </ligand>
</feature>
<feature type="binding site" evidence="1">
    <location>
        <position position="162"/>
    </location>
    <ligand>
        <name>Zn(2+)</name>
        <dbReference type="ChEBI" id="CHEBI:29105"/>
        <label>2</label>
    </ligand>
</feature>
<feature type="binding site" evidence="1">
    <location>
        <position position="181"/>
    </location>
    <ligand>
        <name>Zn(2+)</name>
        <dbReference type="ChEBI" id="CHEBI:29105"/>
        <label>2</label>
    </ligand>
</feature>
<feature type="binding site" evidence="1">
    <location>
        <position position="184"/>
    </location>
    <ligand>
        <name>Zn(2+)</name>
        <dbReference type="ChEBI" id="CHEBI:29105"/>
        <label>2</label>
    </ligand>
</feature>
<feature type="binding site" evidence="1">
    <location>
        <position position="195"/>
    </location>
    <ligand>
        <name>Zn(2+)</name>
        <dbReference type="ChEBI" id="CHEBI:29105"/>
        <label>1</label>
    </ligand>
</feature>
<feature type="binding site" evidence="1">
    <location>
        <position position="198"/>
    </location>
    <ligand>
        <name>Zn(2+)</name>
        <dbReference type="ChEBI" id="CHEBI:29105"/>
        <label>1</label>
    </ligand>
</feature>